<name>RL16_XANOM</name>
<organism>
    <name type="scientific">Xanthomonas oryzae pv. oryzae (strain MAFF 311018)</name>
    <dbReference type="NCBI Taxonomy" id="342109"/>
    <lineage>
        <taxon>Bacteria</taxon>
        <taxon>Pseudomonadati</taxon>
        <taxon>Pseudomonadota</taxon>
        <taxon>Gammaproteobacteria</taxon>
        <taxon>Lysobacterales</taxon>
        <taxon>Lysobacteraceae</taxon>
        <taxon>Xanthomonas</taxon>
    </lineage>
</organism>
<gene>
    <name evidence="1" type="primary">rplP</name>
    <name type="ordered locus">XOO3380</name>
</gene>
<dbReference type="EMBL" id="AP008229">
    <property type="protein sequence ID" value="BAE70135.1"/>
    <property type="molecule type" value="Genomic_DNA"/>
</dbReference>
<dbReference type="RefSeq" id="WP_003486706.1">
    <property type="nucleotide sequence ID" value="NC_007705.1"/>
</dbReference>
<dbReference type="SMR" id="Q2NZZ2"/>
<dbReference type="GeneID" id="97509343"/>
<dbReference type="KEGG" id="xom:XOO3380"/>
<dbReference type="HOGENOM" id="CLU_078858_2_1_6"/>
<dbReference type="GO" id="GO:0022625">
    <property type="term" value="C:cytosolic large ribosomal subunit"/>
    <property type="evidence" value="ECO:0007669"/>
    <property type="project" value="TreeGrafter"/>
</dbReference>
<dbReference type="GO" id="GO:0019843">
    <property type="term" value="F:rRNA binding"/>
    <property type="evidence" value="ECO:0007669"/>
    <property type="project" value="UniProtKB-UniRule"/>
</dbReference>
<dbReference type="GO" id="GO:0003735">
    <property type="term" value="F:structural constituent of ribosome"/>
    <property type="evidence" value="ECO:0007669"/>
    <property type="project" value="InterPro"/>
</dbReference>
<dbReference type="GO" id="GO:0000049">
    <property type="term" value="F:tRNA binding"/>
    <property type="evidence" value="ECO:0007669"/>
    <property type="project" value="UniProtKB-KW"/>
</dbReference>
<dbReference type="GO" id="GO:0006412">
    <property type="term" value="P:translation"/>
    <property type="evidence" value="ECO:0007669"/>
    <property type="project" value="UniProtKB-UniRule"/>
</dbReference>
<dbReference type="CDD" id="cd01433">
    <property type="entry name" value="Ribosomal_L16_L10e"/>
    <property type="match status" value="1"/>
</dbReference>
<dbReference type="FunFam" id="3.90.1170.10:FF:000001">
    <property type="entry name" value="50S ribosomal protein L16"/>
    <property type="match status" value="1"/>
</dbReference>
<dbReference type="Gene3D" id="3.90.1170.10">
    <property type="entry name" value="Ribosomal protein L10e/L16"/>
    <property type="match status" value="1"/>
</dbReference>
<dbReference type="HAMAP" id="MF_01342">
    <property type="entry name" value="Ribosomal_uL16"/>
    <property type="match status" value="1"/>
</dbReference>
<dbReference type="InterPro" id="IPR047873">
    <property type="entry name" value="Ribosomal_uL16"/>
</dbReference>
<dbReference type="InterPro" id="IPR000114">
    <property type="entry name" value="Ribosomal_uL16_bact-type"/>
</dbReference>
<dbReference type="InterPro" id="IPR020798">
    <property type="entry name" value="Ribosomal_uL16_CS"/>
</dbReference>
<dbReference type="InterPro" id="IPR016180">
    <property type="entry name" value="Ribosomal_uL16_dom"/>
</dbReference>
<dbReference type="InterPro" id="IPR036920">
    <property type="entry name" value="Ribosomal_uL16_sf"/>
</dbReference>
<dbReference type="NCBIfam" id="TIGR01164">
    <property type="entry name" value="rplP_bact"/>
    <property type="match status" value="1"/>
</dbReference>
<dbReference type="PANTHER" id="PTHR12220">
    <property type="entry name" value="50S/60S RIBOSOMAL PROTEIN L16"/>
    <property type="match status" value="1"/>
</dbReference>
<dbReference type="PANTHER" id="PTHR12220:SF13">
    <property type="entry name" value="LARGE RIBOSOMAL SUBUNIT PROTEIN UL16M"/>
    <property type="match status" value="1"/>
</dbReference>
<dbReference type="Pfam" id="PF00252">
    <property type="entry name" value="Ribosomal_L16"/>
    <property type="match status" value="1"/>
</dbReference>
<dbReference type="PRINTS" id="PR00060">
    <property type="entry name" value="RIBOSOMALL16"/>
</dbReference>
<dbReference type="SUPFAM" id="SSF54686">
    <property type="entry name" value="Ribosomal protein L16p/L10e"/>
    <property type="match status" value="1"/>
</dbReference>
<dbReference type="PROSITE" id="PS00586">
    <property type="entry name" value="RIBOSOMAL_L16_1"/>
    <property type="match status" value="1"/>
</dbReference>
<dbReference type="PROSITE" id="PS00701">
    <property type="entry name" value="RIBOSOMAL_L16_2"/>
    <property type="match status" value="1"/>
</dbReference>
<accession>Q2NZZ2</accession>
<comment type="function">
    <text evidence="1">Binds 23S rRNA and is also seen to make contacts with the A and possibly P site tRNAs.</text>
</comment>
<comment type="subunit">
    <text evidence="1">Part of the 50S ribosomal subunit.</text>
</comment>
<comment type="similarity">
    <text evidence="1">Belongs to the universal ribosomal protein uL16 family.</text>
</comment>
<evidence type="ECO:0000255" key="1">
    <source>
        <dbReference type="HAMAP-Rule" id="MF_01342"/>
    </source>
</evidence>
<evidence type="ECO:0000305" key="2"/>
<proteinExistence type="inferred from homology"/>
<feature type="chain" id="PRO_0000251689" description="Large ribosomal subunit protein uL16">
    <location>
        <begin position="1"/>
        <end position="137"/>
    </location>
</feature>
<keyword id="KW-0687">Ribonucleoprotein</keyword>
<keyword id="KW-0689">Ribosomal protein</keyword>
<keyword id="KW-0694">RNA-binding</keyword>
<keyword id="KW-0699">rRNA-binding</keyword>
<keyword id="KW-0820">tRNA-binding</keyword>
<reference key="1">
    <citation type="journal article" date="2005" name="Jpn. Agric. Res. Q.">
        <title>Genome sequence of Xanthomonas oryzae pv. oryzae suggests contribution of large numbers of effector genes and insertion sequences to its race diversity.</title>
        <authorList>
            <person name="Ochiai H."/>
            <person name="Inoue Y."/>
            <person name="Takeya M."/>
            <person name="Sasaki A."/>
            <person name="Kaku H."/>
        </authorList>
    </citation>
    <scope>NUCLEOTIDE SEQUENCE [LARGE SCALE GENOMIC DNA]</scope>
    <source>
        <strain>MAFF 311018</strain>
    </source>
</reference>
<protein>
    <recommendedName>
        <fullName evidence="1">Large ribosomal subunit protein uL16</fullName>
    </recommendedName>
    <alternativeName>
        <fullName evidence="2">50S ribosomal protein L16</fullName>
    </alternativeName>
</protein>
<sequence>MLQPKRTKYRKMHKGRNDGLAWSGNAVSFGEYGLKATAHGQLTARQIEAARRTISRHVKKGGKMWIRVFPDKPITKKPIEVRMGSGKGNVEYWVAQIQPGRMIYEIEGIPEETAREAFRLAAAKLSVTTTFVTRTVR</sequence>